<comment type="function">
    <text evidence="3 4">Modulates Cav2.1/CACNA1A voltage-gated calcium channels (P/Q-type currents) in rat cerebellar Purkinje cells and hippocampal CA1-CA3 neurons (By similarity). At saturating concentrations (&gt;10 nM) decelerates activation kinetics and slightly increases peak amplitude without affecting deactivation kinetics (By similarity). In vivo, does not cause death when intravenously injected into mice (By similarity). In rat models, through its activity on Cav2.1/CACNA1A, has an ameliorative effect on memory defects provoked by hyperstimulation of N-methyl-D-aspartate receptors (NMDARs) in the hippocampus (By similarity).</text>
</comment>
<comment type="subcellular location">
    <subcellularLocation>
        <location evidence="8">Secreted</location>
    </subcellularLocation>
</comment>
<comment type="tissue specificity">
    <text evidence="8">Expressed by the venom gland.</text>
</comment>
<comment type="domain">
    <text evidence="7">The presence of a 'disulfide through disulfide knot' structurally defines this protein as a knottin.</text>
</comment>
<comment type="miscellaneous">
    <text evidence="7">According to the nomenclature proposed by King and colleagues (2008), 'Gsp(267)' comes from the species name 'Geolycosa sp (strain A267TDLS2-KZARNA)' (PubMed:17888477). This species has been reclassified since that study, as indicated in the work of Oparin and colleagues (2016) (PMID:27412961).</text>
</comment>
<comment type="similarity">
    <text evidence="7">Belongs to the neurotoxin omega-lctx family.</text>
</comment>
<feature type="signal peptide" evidence="5">
    <location>
        <begin position="1"/>
        <end position="17"/>
    </location>
</feature>
<feature type="propeptide" id="PRO_0000388737" evidence="1">
    <location>
        <begin position="18"/>
        <end position="40"/>
    </location>
</feature>
<feature type="chain" id="PRO_0000388738" description="Omega-lycotoxin-Am1c">
    <location>
        <begin position="41"/>
        <end position="87"/>
    </location>
</feature>
<feature type="disulfide bond" evidence="2">
    <location>
        <begin position="44"/>
        <end position="59"/>
    </location>
</feature>
<feature type="disulfide bond" evidence="2">
    <location>
        <begin position="51"/>
        <end position="64"/>
    </location>
</feature>
<feature type="disulfide bond" evidence="2">
    <location>
        <begin position="58"/>
        <end position="84"/>
    </location>
</feature>
<feature type="disulfide bond" evidence="2">
    <location>
        <begin position="66"/>
        <end position="82"/>
    </location>
</feature>
<keyword id="KW-0108">Calcium channel impairing toxin</keyword>
<keyword id="KW-1015">Disulfide bond</keyword>
<keyword id="KW-0872">Ion channel impairing toxin</keyword>
<keyword id="KW-0960">Knottin</keyword>
<keyword id="KW-0528">Neurotoxin</keyword>
<keyword id="KW-0964">Secreted</keyword>
<keyword id="KW-0732">Signal</keyword>
<keyword id="KW-0800">Toxin</keyword>
<keyword id="KW-1218">Voltage-gated calcium channel impairing toxin</keyword>
<dbReference type="EMBL" id="EF187333">
    <property type="protein sequence ID" value="ABP68827.1"/>
    <property type="molecule type" value="mRNA"/>
</dbReference>
<dbReference type="ArachnoServer" id="AS000446">
    <property type="toxin name" value="omega-lycotoxin-Gsp2671c"/>
</dbReference>
<dbReference type="GO" id="GO:0005576">
    <property type="term" value="C:extracellular region"/>
    <property type="evidence" value="ECO:0007669"/>
    <property type="project" value="UniProtKB-SubCell"/>
</dbReference>
<dbReference type="GO" id="GO:0005246">
    <property type="term" value="F:calcium channel regulator activity"/>
    <property type="evidence" value="ECO:0007669"/>
    <property type="project" value="UniProtKB-KW"/>
</dbReference>
<dbReference type="GO" id="GO:0090729">
    <property type="term" value="F:toxin activity"/>
    <property type="evidence" value="ECO:0007669"/>
    <property type="project" value="UniProtKB-KW"/>
</dbReference>
<reference key="1">
    <citation type="journal article" date="2007" name="Toxicon">
        <title>Omega-Lsp-IA, a novel modulator of P-type Ca(2+) channels.</title>
        <authorList>
            <person name="Pluzhnikov K.A."/>
            <person name="Vassilevski A."/>
            <person name="Korolkova Y."/>
            <person name="Fisyunov A."/>
            <person name="Iegorova O."/>
            <person name="Krishtal O."/>
            <person name="Grishin E."/>
        </authorList>
    </citation>
    <scope>NUCLEOTIDE SEQUENCE [MRNA]</scope>
    <source>
        <tissue>Venom gland</tissue>
    </source>
</reference>
<organism>
    <name type="scientific">Alopecosa marikovskyi</name>
    <name type="common">Wolf spider</name>
    <name type="synonym">Lycosa kazakhstanicus</name>
    <dbReference type="NCBI Taxonomy" id="2066572"/>
    <lineage>
        <taxon>Eukaryota</taxon>
        <taxon>Metazoa</taxon>
        <taxon>Ecdysozoa</taxon>
        <taxon>Arthropoda</taxon>
        <taxon>Chelicerata</taxon>
        <taxon>Arachnida</taxon>
        <taxon>Araneae</taxon>
        <taxon>Araneomorphae</taxon>
        <taxon>Entelegynae</taxon>
        <taxon>Lycosoidea</taxon>
        <taxon>Lycosidae</taxon>
        <taxon>Alopecosa</taxon>
    </lineage>
</organism>
<protein>
    <recommendedName>
        <fullName evidence="7">Omega-lycotoxin-Am1c</fullName>
        <shortName evidence="7">Omega-LCTX-Am1c</shortName>
    </recommendedName>
    <alternativeName>
        <fullName evidence="6 7">Omega-Lsp-IA-like 2</fullName>
    </alternativeName>
    <alternativeName>
        <fullName evidence="7">Omega-lycotoxin-Gsp(267)1c</fullName>
        <shortName evidence="7">Omega-LCTX-Gsp(267)1c</shortName>
    </alternativeName>
</protein>
<name>TLCOC_ALOMR</name>
<proteinExistence type="inferred from homology"/>
<sequence>MKLSIFFVLFFIAIAYCQPEFLDDEEDEVEETLPVAEEGREKSCITWRNSCMHNDKGCCFPWSCVCWSQTVSRNSSGKEKKCQCRLW</sequence>
<accession>A9XDG1</accession>
<evidence type="ECO:0000250" key="1"/>
<evidence type="ECO:0000250" key="2">
    <source>
        <dbReference type="UniProtKB" id="A0A0G3F8Z3"/>
    </source>
</evidence>
<evidence type="ECO:0000250" key="3">
    <source>
        <dbReference type="UniProtKB" id="P0DRA9"/>
    </source>
</evidence>
<evidence type="ECO:0000250" key="4">
    <source>
        <dbReference type="UniProtKB" id="P85079"/>
    </source>
</evidence>
<evidence type="ECO:0000255" key="5"/>
<evidence type="ECO:0000303" key="6">
    <source>
    </source>
</evidence>
<evidence type="ECO:0000305" key="7"/>
<evidence type="ECO:0000305" key="8">
    <source>
    </source>
</evidence>